<feature type="chain" id="PRO_1000046157" description="Large ribosomal subunit protein uL11">
    <location>
        <begin position="1"/>
        <end position="141"/>
    </location>
</feature>
<reference key="1">
    <citation type="submission" date="2007-04" db="EMBL/GenBank/DDBJ databases">
        <title>Genome sequence of the thermophilic hydrogen-producing bacterium Caldicellulosiruptor saccharolyticus DSM 8903.</title>
        <authorList>
            <person name="Copeland A."/>
            <person name="Lucas S."/>
            <person name="Lapidus A."/>
            <person name="Barry K."/>
            <person name="Detter J.C."/>
            <person name="Glavina del Rio T."/>
            <person name="Hammon N."/>
            <person name="Israni S."/>
            <person name="Dalin E."/>
            <person name="Tice H."/>
            <person name="Pitluck S."/>
            <person name="Kiss H."/>
            <person name="Brettin T."/>
            <person name="Bruce D."/>
            <person name="Han C."/>
            <person name="Schmutz J."/>
            <person name="Larimer F."/>
            <person name="Land M."/>
            <person name="Hauser L."/>
            <person name="Kyrpides N."/>
            <person name="Lykidis A."/>
            <person name="van de Werken H.J.G."/>
            <person name="Verhaart M.R.A."/>
            <person name="VanFossen A.L."/>
            <person name="Lewis D.L."/>
            <person name="Nichols J.D."/>
            <person name="Goorissen H.P."/>
            <person name="van Niel E.W.J."/>
            <person name="Stams F.J.M."/>
            <person name="Willquist K.U."/>
            <person name="Ward D.E."/>
            <person name="van der Oost J."/>
            <person name="Kelly R.M."/>
            <person name="Kengen S.M.W."/>
            <person name="Richardson P."/>
        </authorList>
    </citation>
    <scope>NUCLEOTIDE SEQUENCE [LARGE SCALE GENOMIC DNA]</scope>
    <source>
        <strain>ATCC 43494 / DSM 8903 / Tp8T 6331</strain>
    </source>
</reference>
<name>RL11_CALS8</name>
<comment type="function">
    <text evidence="1">Forms part of the ribosomal stalk which helps the ribosome interact with GTP-bound translation factors.</text>
</comment>
<comment type="subunit">
    <text evidence="1">Part of the ribosomal stalk of the 50S ribosomal subunit. Interacts with L10 and the large rRNA to form the base of the stalk. L10 forms an elongated spine to which L12 dimers bind in a sequential fashion forming a multimeric L10(L12)X complex.</text>
</comment>
<comment type="PTM">
    <text evidence="1">One or more lysine residues are methylated.</text>
</comment>
<comment type="similarity">
    <text evidence="1">Belongs to the universal ribosomal protein uL11 family.</text>
</comment>
<proteinExistence type="inferred from homology"/>
<accession>A4XLK2</accession>
<evidence type="ECO:0000255" key="1">
    <source>
        <dbReference type="HAMAP-Rule" id="MF_00736"/>
    </source>
</evidence>
<evidence type="ECO:0000305" key="2"/>
<keyword id="KW-0488">Methylation</keyword>
<keyword id="KW-0687">Ribonucleoprotein</keyword>
<keyword id="KW-0689">Ribosomal protein</keyword>
<keyword id="KW-0694">RNA-binding</keyword>
<keyword id="KW-0699">rRNA-binding</keyword>
<protein>
    <recommendedName>
        <fullName evidence="1">Large ribosomal subunit protein uL11</fullName>
    </recommendedName>
    <alternativeName>
        <fullName evidence="2">50S ribosomal protein L11</fullName>
    </alternativeName>
</protein>
<gene>
    <name evidence="1" type="primary">rplK</name>
    <name type="ordered locus">Csac_2207</name>
</gene>
<sequence>MAKKVLTQIKLQIPAGKATPAPPVGPALGQHGVNIMQFCKEFNERTAKDAGLIIPVVITVYSDRSFTFITKTPPASVLLKKAAGIESGSPKPNKQKVATLKRDVIRKIAEQKMPDLTAATLEAAMRTIEGTAKSMGIVVED</sequence>
<organism>
    <name type="scientific">Caldicellulosiruptor saccharolyticus (strain ATCC 43494 / DSM 8903 / Tp8T 6331)</name>
    <dbReference type="NCBI Taxonomy" id="351627"/>
    <lineage>
        <taxon>Bacteria</taxon>
        <taxon>Bacillati</taxon>
        <taxon>Bacillota</taxon>
        <taxon>Bacillota incertae sedis</taxon>
        <taxon>Caldicellulosiruptorales</taxon>
        <taxon>Caldicellulosiruptoraceae</taxon>
        <taxon>Caldicellulosiruptor</taxon>
    </lineage>
</organism>
<dbReference type="EMBL" id="CP000679">
    <property type="protein sequence ID" value="ABP67787.1"/>
    <property type="molecule type" value="Genomic_DNA"/>
</dbReference>
<dbReference type="RefSeq" id="WP_011917716.1">
    <property type="nucleotide sequence ID" value="NC_009437.1"/>
</dbReference>
<dbReference type="SMR" id="A4XLK2"/>
<dbReference type="STRING" id="351627.Csac_2207"/>
<dbReference type="KEGG" id="csc:Csac_2207"/>
<dbReference type="eggNOG" id="COG0080">
    <property type="taxonomic scope" value="Bacteria"/>
</dbReference>
<dbReference type="HOGENOM" id="CLU_074237_2_1_9"/>
<dbReference type="OrthoDB" id="9802408at2"/>
<dbReference type="Proteomes" id="UP000000256">
    <property type="component" value="Chromosome"/>
</dbReference>
<dbReference type="GO" id="GO:0022625">
    <property type="term" value="C:cytosolic large ribosomal subunit"/>
    <property type="evidence" value="ECO:0007669"/>
    <property type="project" value="TreeGrafter"/>
</dbReference>
<dbReference type="GO" id="GO:0070180">
    <property type="term" value="F:large ribosomal subunit rRNA binding"/>
    <property type="evidence" value="ECO:0007669"/>
    <property type="project" value="UniProtKB-UniRule"/>
</dbReference>
<dbReference type="GO" id="GO:0003735">
    <property type="term" value="F:structural constituent of ribosome"/>
    <property type="evidence" value="ECO:0007669"/>
    <property type="project" value="InterPro"/>
</dbReference>
<dbReference type="GO" id="GO:0006412">
    <property type="term" value="P:translation"/>
    <property type="evidence" value="ECO:0007669"/>
    <property type="project" value="UniProtKB-UniRule"/>
</dbReference>
<dbReference type="CDD" id="cd00349">
    <property type="entry name" value="Ribosomal_L11"/>
    <property type="match status" value="1"/>
</dbReference>
<dbReference type="FunFam" id="1.10.10.250:FF:000001">
    <property type="entry name" value="50S ribosomal protein L11"/>
    <property type="match status" value="1"/>
</dbReference>
<dbReference type="FunFam" id="3.30.1550.10:FF:000001">
    <property type="entry name" value="50S ribosomal protein L11"/>
    <property type="match status" value="1"/>
</dbReference>
<dbReference type="Gene3D" id="1.10.10.250">
    <property type="entry name" value="Ribosomal protein L11, C-terminal domain"/>
    <property type="match status" value="1"/>
</dbReference>
<dbReference type="Gene3D" id="3.30.1550.10">
    <property type="entry name" value="Ribosomal protein L11/L12, N-terminal domain"/>
    <property type="match status" value="1"/>
</dbReference>
<dbReference type="HAMAP" id="MF_00736">
    <property type="entry name" value="Ribosomal_uL11"/>
    <property type="match status" value="1"/>
</dbReference>
<dbReference type="InterPro" id="IPR000911">
    <property type="entry name" value="Ribosomal_uL11"/>
</dbReference>
<dbReference type="InterPro" id="IPR006519">
    <property type="entry name" value="Ribosomal_uL11_bac-typ"/>
</dbReference>
<dbReference type="InterPro" id="IPR020783">
    <property type="entry name" value="Ribosomal_uL11_C"/>
</dbReference>
<dbReference type="InterPro" id="IPR036769">
    <property type="entry name" value="Ribosomal_uL11_C_sf"/>
</dbReference>
<dbReference type="InterPro" id="IPR020785">
    <property type="entry name" value="Ribosomal_uL11_CS"/>
</dbReference>
<dbReference type="InterPro" id="IPR020784">
    <property type="entry name" value="Ribosomal_uL11_N"/>
</dbReference>
<dbReference type="InterPro" id="IPR036796">
    <property type="entry name" value="Ribosomal_uL11_N_sf"/>
</dbReference>
<dbReference type="NCBIfam" id="TIGR01632">
    <property type="entry name" value="L11_bact"/>
    <property type="match status" value="1"/>
</dbReference>
<dbReference type="PANTHER" id="PTHR11661">
    <property type="entry name" value="60S RIBOSOMAL PROTEIN L12"/>
    <property type="match status" value="1"/>
</dbReference>
<dbReference type="PANTHER" id="PTHR11661:SF1">
    <property type="entry name" value="LARGE RIBOSOMAL SUBUNIT PROTEIN UL11M"/>
    <property type="match status" value="1"/>
</dbReference>
<dbReference type="Pfam" id="PF00298">
    <property type="entry name" value="Ribosomal_L11"/>
    <property type="match status" value="1"/>
</dbReference>
<dbReference type="Pfam" id="PF03946">
    <property type="entry name" value="Ribosomal_L11_N"/>
    <property type="match status" value="1"/>
</dbReference>
<dbReference type="SMART" id="SM00649">
    <property type="entry name" value="RL11"/>
    <property type="match status" value="1"/>
</dbReference>
<dbReference type="SUPFAM" id="SSF54747">
    <property type="entry name" value="Ribosomal L11/L12e N-terminal domain"/>
    <property type="match status" value="1"/>
</dbReference>
<dbReference type="SUPFAM" id="SSF46906">
    <property type="entry name" value="Ribosomal protein L11, C-terminal domain"/>
    <property type="match status" value="1"/>
</dbReference>
<dbReference type="PROSITE" id="PS00359">
    <property type="entry name" value="RIBOSOMAL_L11"/>
    <property type="match status" value="1"/>
</dbReference>